<dbReference type="EC" id="5.6.1.7" evidence="1"/>
<dbReference type="EMBL" id="AY741371">
    <property type="protein sequence ID" value="AAX13831.1"/>
    <property type="molecule type" value="Genomic_DNA"/>
</dbReference>
<dbReference type="RefSeq" id="YP_277332.1">
    <property type="nucleotide sequence ID" value="NC_007288.1"/>
</dbReference>
<dbReference type="SMR" id="Q4G3D5"/>
<dbReference type="STRING" id="2903.Q4G3D5"/>
<dbReference type="GeneID" id="3562562"/>
<dbReference type="GO" id="GO:0009507">
    <property type="term" value="C:chloroplast"/>
    <property type="evidence" value="ECO:0007669"/>
    <property type="project" value="UniProtKB-SubCell"/>
</dbReference>
<dbReference type="GO" id="GO:0005524">
    <property type="term" value="F:ATP binding"/>
    <property type="evidence" value="ECO:0007669"/>
    <property type="project" value="UniProtKB-UniRule"/>
</dbReference>
<dbReference type="GO" id="GO:0140662">
    <property type="term" value="F:ATP-dependent protein folding chaperone"/>
    <property type="evidence" value="ECO:0007669"/>
    <property type="project" value="InterPro"/>
</dbReference>
<dbReference type="GO" id="GO:0016853">
    <property type="term" value="F:isomerase activity"/>
    <property type="evidence" value="ECO:0007669"/>
    <property type="project" value="UniProtKB-KW"/>
</dbReference>
<dbReference type="GO" id="GO:0051082">
    <property type="term" value="F:unfolded protein binding"/>
    <property type="evidence" value="ECO:0007669"/>
    <property type="project" value="UniProtKB-UniRule"/>
</dbReference>
<dbReference type="GO" id="GO:0042026">
    <property type="term" value="P:protein refolding"/>
    <property type="evidence" value="ECO:0007669"/>
    <property type="project" value="UniProtKB-UniRule"/>
</dbReference>
<dbReference type="CDD" id="cd03344">
    <property type="entry name" value="GroEL"/>
    <property type="match status" value="1"/>
</dbReference>
<dbReference type="FunFam" id="3.50.7.10:FF:000001">
    <property type="entry name" value="60 kDa chaperonin"/>
    <property type="match status" value="1"/>
</dbReference>
<dbReference type="Gene3D" id="3.50.7.10">
    <property type="entry name" value="GroEL"/>
    <property type="match status" value="1"/>
</dbReference>
<dbReference type="Gene3D" id="1.10.560.10">
    <property type="entry name" value="GroEL-like equatorial domain"/>
    <property type="match status" value="1"/>
</dbReference>
<dbReference type="Gene3D" id="3.30.260.10">
    <property type="entry name" value="TCP-1-like chaperonin intermediate domain"/>
    <property type="match status" value="1"/>
</dbReference>
<dbReference type="HAMAP" id="MF_00600">
    <property type="entry name" value="CH60"/>
    <property type="match status" value="1"/>
</dbReference>
<dbReference type="InterPro" id="IPR018370">
    <property type="entry name" value="Chaperonin_Cpn60_CS"/>
</dbReference>
<dbReference type="InterPro" id="IPR001844">
    <property type="entry name" value="Cpn60/GroEL"/>
</dbReference>
<dbReference type="InterPro" id="IPR002423">
    <property type="entry name" value="Cpn60/GroEL/TCP-1"/>
</dbReference>
<dbReference type="InterPro" id="IPR027409">
    <property type="entry name" value="GroEL-like_apical_dom_sf"/>
</dbReference>
<dbReference type="InterPro" id="IPR027413">
    <property type="entry name" value="GROEL-like_equatorial_sf"/>
</dbReference>
<dbReference type="InterPro" id="IPR027410">
    <property type="entry name" value="TCP-1-like_intermed_sf"/>
</dbReference>
<dbReference type="NCBIfam" id="TIGR02348">
    <property type="entry name" value="GroEL"/>
    <property type="match status" value="1"/>
</dbReference>
<dbReference type="NCBIfam" id="NF000592">
    <property type="entry name" value="PRK00013.1"/>
    <property type="match status" value="1"/>
</dbReference>
<dbReference type="NCBIfam" id="NF009487">
    <property type="entry name" value="PRK12849.1"/>
    <property type="match status" value="1"/>
</dbReference>
<dbReference type="NCBIfam" id="NF009488">
    <property type="entry name" value="PRK12850.1"/>
    <property type="match status" value="1"/>
</dbReference>
<dbReference type="NCBIfam" id="NF009489">
    <property type="entry name" value="PRK12851.1"/>
    <property type="match status" value="1"/>
</dbReference>
<dbReference type="PANTHER" id="PTHR45633">
    <property type="entry name" value="60 KDA HEAT SHOCK PROTEIN, MITOCHONDRIAL"/>
    <property type="match status" value="1"/>
</dbReference>
<dbReference type="Pfam" id="PF00118">
    <property type="entry name" value="Cpn60_TCP1"/>
    <property type="match status" value="1"/>
</dbReference>
<dbReference type="PRINTS" id="PR00298">
    <property type="entry name" value="CHAPERONIN60"/>
</dbReference>
<dbReference type="SUPFAM" id="SSF52029">
    <property type="entry name" value="GroEL apical domain-like"/>
    <property type="match status" value="1"/>
</dbReference>
<dbReference type="SUPFAM" id="SSF48592">
    <property type="entry name" value="GroEL equatorial domain-like"/>
    <property type="match status" value="2"/>
</dbReference>
<dbReference type="PROSITE" id="PS00296">
    <property type="entry name" value="CHAPERONINS_CPN60"/>
    <property type="match status" value="1"/>
</dbReference>
<keyword id="KW-0067">ATP-binding</keyword>
<keyword id="KW-0143">Chaperone</keyword>
<keyword id="KW-0150">Chloroplast</keyword>
<keyword id="KW-0413">Isomerase</keyword>
<keyword id="KW-0547">Nucleotide-binding</keyword>
<keyword id="KW-0934">Plastid</keyword>
<name>CH60_EMIHU</name>
<gene>
    <name evidence="1" type="primary">groEL</name>
    <name evidence="1" type="synonym">groL</name>
</gene>
<reference key="1">
    <citation type="journal article" date="2005" name="DNA Res.">
        <title>The complete plastid genome sequence of the haptophyte Emiliania huxleyi: a comparison to other plastid genomes.</title>
        <authorList>
            <person name="Sanchez-Puerta M.V."/>
            <person name="Bachvaroff T.R."/>
            <person name="Delwiche C.F."/>
        </authorList>
    </citation>
    <scope>NUCLEOTIDE SEQUENCE [LARGE SCALE GENOMIC DNA]</scope>
    <source>
        <strain>CCMP373 / CSIRO-CS-57 / BT6</strain>
    </source>
</reference>
<geneLocation type="chloroplast"/>
<comment type="function">
    <text evidence="1">Together with its co-chaperonin GroES, plays an essential role in assisting protein folding. The GroEL-GroES system forms a nano-cage that allows encapsulation of the non-native substrate proteins and provides a physical environment optimized to promote and accelerate protein folding.</text>
</comment>
<comment type="catalytic activity">
    <reaction evidence="1">
        <text>ATP + H2O + a folded polypeptide = ADP + phosphate + an unfolded polypeptide.</text>
        <dbReference type="EC" id="5.6.1.7"/>
    </reaction>
</comment>
<comment type="subunit">
    <text evidence="1">Forms a cylinder of 14 subunits composed of two heptameric rings stacked back-to-back. Interacts with the co-chaperonin GroES.</text>
</comment>
<comment type="subcellular location">
    <subcellularLocation>
        <location evidence="1">Plastid</location>
        <location evidence="1">Chloroplast</location>
    </subcellularLocation>
</comment>
<comment type="similarity">
    <text evidence="1">Belongs to the chaperonin (HSP60) family.</text>
</comment>
<protein>
    <recommendedName>
        <fullName evidence="1">Chaperonin GroEL, chloroplastic</fullName>
        <ecNumber evidence="1">5.6.1.7</ecNumber>
    </recommendedName>
    <alternativeName>
        <fullName evidence="1">60 kDa chaperonin</fullName>
    </alternativeName>
    <alternativeName>
        <fullName evidence="1">Chaperonin-60</fullName>
        <shortName evidence="1">Cpn60</shortName>
    </alternativeName>
</protein>
<evidence type="ECO:0000255" key="1">
    <source>
        <dbReference type="HAMAP-Rule" id="MF_00600"/>
    </source>
</evidence>
<feature type="chain" id="PRO_0000275257" description="Chaperonin GroEL, chloroplastic">
    <location>
        <begin position="1"/>
        <end position="531"/>
    </location>
</feature>
<feature type="binding site" evidence="1">
    <location>
        <begin position="30"/>
        <end position="33"/>
    </location>
    <ligand>
        <name>ATP</name>
        <dbReference type="ChEBI" id="CHEBI:30616"/>
    </ligand>
</feature>
<feature type="binding site" evidence="1">
    <location>
        <begin position="87"/>
        <end position="91"/>
    </location>
    <ligand>
        <name>ATP</name>
        <dbReference type="ChEBI" id="CHEBI:30616"/>
    </ligand>
</feature>
<feature type="binding site" evidence="1">
    <location>
        <position position="415"/>
    </location>
    <ligand>
        <name>ATP</name>
        <dbReference type="ChEBI" id="CHEBI:30616"/>
    </ligand>
</feature>
<feature type="binding site" evidence="1">
    <location>
        <begin position="481"/>
        <end position="483"/>
    </location>
    <ligand>
        <name>ATP</name>
        <dbReference type="ChEBI" id="CHEBI:30616"/>
    </ligand>
</feature>
<feature type="binding site" evidence="1">
    <location>
        <position position="497"/>
    </location>
    <ligand>
        <name>ATP</name>
        <dbReference type="ChEBI" id="CHEBI:30616"/>
    </ligand>
</feature>
<proteinExistence type="inferred from homology"/>
<sequence>MGVKTILYQEDARKALERGMDILAEAVSVTLGPKGRNVVLEKKFGTPQIVNDGVTIAKEINLQDTLENTGVSLIRQAASKTNDVAGDGTTTATVLAYAIIKQGMRNVAAGANPIVLKRGIEKATQFVVRKIMDYARPIENLTDITQVAQISAGNDAEVGSLIANAIDKVGREGLISLEESKSTATELEITEGMGFDRGFISGYFVTNTERMEVVLDNPYILLTDKKITVVKQDLVPTLELVSKTNQPLLIISDNVEKEALATLIVNKLRGILNVVAVRAPGFGDRRKAILQDLAVLTGGDVITADAGLSLERMDIENLGVARRVVVGKENTTIISDSNKQEVLARCEQLRRQMETSDSTYEKEKLQERLAKLTGGVAVIKVGAATETEMKDRKLRLEDAVNATKAAVEEGIVPGGGTTLIHIAAELLEWVKETLTGDELLGGLIVEKALQAPLKKIALNAGENGSIIVERIKESDFEIGYNAATNEIVDMYEAGIIDPAKVTRSTLQNAASIASMILTTECIIVDKNKETK</sequence>
<accession>Q4G3D5</accession>
<organism>
    <name type="scientific">Emiliania huxleyi</name>
    <name type="common">Coccolithophore</name>
    <name type="synonym">Pontosphaera huxleyi</name>
    <dbReference type="NCBI Taxonomy" id="2903"/>
    <lineage>
        <taxon>Eukaryota</taxon>
        <taxon>Haptista</taxon>
        <taxon>Haptophyta</taxon>
        <taxon>Prymnesiophyceae</taxon>
        <taxon>Isochrysidales</taxon>
        <taxon>Noelaerhabdaceae</taxon>
        <taxon>Emiliania</taxon>
    </lineage>
</organism>